<accession>B5Y7V9</accession>
<gene>
    <name evidence="1" type="primary">coaD</name>
    <name type="ordered locus">COPRO5265_0497</name>
</gene>
<keyword id="KW-0067">ATP-binding</keyword>
<keyword id="KW-0173">Coenzyme A biosynthesis</keyword>
<keyword id="KW-0963">Cytoplasm</keyword>
<keyword id="KW-0460">Magnesium</keyword>
<keyword id="KW-0547">Nucleotide-binding</keyword>
<keyword id="KW-0548">Nucleotidyltransferase</keyword>
<keyword id="KW-1185">Reference proteome</keyword>
<keyword id="KW-0808">Transferase</keyword>
<comment type="function">
    <text evidence="1">Reversibly transfers an adenylyl group from ATP to 4'-phosphopantetheine, yielding dephospho-CoA (dPCoA) and pyrophosphate.</text>
</comment>
<comment type="catalytic activity">
    <reaction evidence="1">
        <text>(R)-4'-phosphopantetheine + ATP + H(+) = 3'-dephospho-CoA + diphosphate</text>
        <dbReference type="Rhea" id="RHEA:19801"/>
        <dbReference type="ChEBI" id="CHEBI:15378"/>
        <dbReference type="ChEBI" id="CHEBI:30616"/>
        <dbReference type="ChEBI" id="CHEBI:33019"/>
        <dbReference type="ChEBI" id="CHEBI:57328"/>
        <dbReference type="ChEBI" id="CHEBI:61723"/>
        <dbReference type="EC" id="2.7.7.3"/>
    </reaction>
</comment>
<comment type="cofactor">
    <cofactor evidence="1">
        <name>Mg(2+)</name>
        <dbReference type="ChEBI" id="CHEBI:18420"/>
    </cofactor>
</comment>
<comment type="pathway">
    <text evidence="1">Cofactor biosynthesis; coenzyme A biosynthesis; CoA from (R)-pantothenate: step 4/5.</text>
</comment>
<comment type="subunit">
    <text evidence="1">Homohexamer.</text>
</comment>
<comment type="subcellular location">
    <subcellularLocation>
        <location evidence="1">Cytoplasm</location>
    </subcellularLocation>
</comment>
<comment type="similarity">
    <text evidence="1">Belongs to the bacterial CoaD family.</text>
</comment>
<sequence length="164" mass="18612">MTKVVYPGTFDPITKGHLDILVRAAQVFDQVTLLVLSNLQKKSLFSLEERVRLAKSAIEESNAPSNIIVDSYEGVTVHYLEEHGIRLIIRGLRAVSDYEYEIQLFLANKYLNSQVETVLMPTSLRYQFVSSSLVKEMVSFGLDVSEFVTPTVERALKEKLEVKQ</sequence>
<organism>
    <name type="scientific">Coprothermobacter proteolyticus (strain ATCC 35245 / DSM 5265 / OCM 4 / BT)</name>
    <dbReference type="NCBI Taxonomy" id="309798"/>
    <lineage>
        <taxon>Bacteria</taxon>
        <taxon>Pseudomonadati</taxon>
        <taxon>Coprothermobacterota</taxon>
        <taxon>Coprothermobacteria</taxon>
        <taxon>Coprothermobacterales</taxon>
        <taxon>Coprothermobacteraceae</taxon>
        <taxon>Coprothermobacter</taxon>
    </lineage>
</organism>
<name>COAD_COPPD</name>
<dbReference type="EC" id="2.7.7.3" evidence="1"/>
<dbReference type="EMBL" id="CP001145">
    <property type="protein sequence ID" value="ACI16893.1"/>
    <property type="molecule type" value="Genomic_DNA"/>
</dbReference>
<dbReference type="RefSeq" id="WP_012543545.1">
    <property type="nucleotide sequence ID" value="NC_011295.1"/>
</dbReference>
<dbReference type="SMR" id="B5Y7V9"/>
<dbReference type="STRING" id="309798.COPRO5265_0497"/>
<dbReference type="KEGG" id="cpo:COPRO5265_0497"/>
<dbReference type="eggNOG" id="COG0669">
    <property type="taxonomic scope" value="Bacteria"/>
</dbReference>
<dbReference type="HOGENOM" id="CLU_100149_1_1_9"/>
<dbReference type="OrthoDB" id="9806661at2"/>
<dbReference type="UniPathway" id="UPA00241">
    <property type="reaction ID" value="UER00355"/>
</dbReference>
<dbReference type="Proteomes" id="UP000001732">
    <property type="component" value="Chromosome"/>
</dbReference>
<dbReference type="GO" id="GO:0005737">
    <property type="term" value="C:cytoplasm"/>
    <property type="evidence" value="ECO:0007669"/>
    <property type="project" value="UniProtKB-SubCell"/>
</dbReference>
<dbReference type="GO" id="GO:0005524">
    <property type="term" value="F:ATP binding"/>
    <property type="evidence" value="ECO:0007669"/>
    <property type="project" value="UniProtKB-KW"/>
</dbReference>
<dbReference type="GO" id="GO:0004595">
    <property type="term" value="F:pantetheine-phosphate adenylyltransferase activity"/>
    <property type="evidence" value="ECO:0007669"/>
    <property type="project" value="UniProtKB-UniRule"/>
</dbReference>
<dbReference type="GO" id="GO:0015937">
    <property type="term" value="P:coenzyme A biosynthetic process"/>
    <property type="evidence" value="ECO:0007669"/>
    <property type="project" value="UniProtKB-UniRule"/>
</dbReference>
<dbReference type="CDD" id="cd02163">
    <property type="entry name" value="PPAT"/>
    <property type="match status" value="1"/>
</dbReference>
<dbReference type="Gene3D" id="3.40.50.620">
    <property type="entry name" value="HUPs"/>
    <property type="match status" value="1"/>
</dbReference>
<dbReference type="HAMAP" id="MF_00151">
    <property type="entry name" value="PPAT_bact"/>
    <property type="match status" value="1"/>
</dbReference>
<dbReference type="InterPro" id="IPR004821">
    <property type="entry name" value="Cyt_trans-like"/>
</dbReference>
<dbReference type="InterPro" id="IPR001980">
    <property type="entry name" value="PPAT"/>
</dbReference>
<dbReference type="InterPro" id="IPR014729">
    <property type="entry name" value="Rossmann-like_a/b/a_fold"/>
</dbReference>
<dbReference type="NCBIfam" id="TIGR01510">
    <property type="entry name" value="coaD_prev_kdtB"/>
    <property type="match status" value="1"/>
</dbReference>
<dbReference type="NCBIfam" id="TIGR00125">
    <property type="entry name" value="cyt_tran_rel"/>
    <property type="match status" value="1"/>
</dbReference>
<dbReference type="PANTHER" id="PTHR21342">
    <property type="entry name" value="PHOSPHOPANTETHEINE ADENYLYLTRANSFERASE"/>
    <property type="match status" value="1"/>
</dbReference>
<dbReference type="PANTHER" id="PTHR21342:SF1">
    <property type="entry name" value="PHOSPHOPANTETHEINE ADENYLYLTRANSFERASE"/>
    <property type="match status" value="1"/>
</dbReference>
<dbReference type="Pfam" id="PF01467">
    <property type="entry name" value="CTP_transf_like"/>
    <property type="match status" value="1"/>
</dbReference>
<dbReference type="PRINTS" id="PR01020">
    <property type="entry name" value="LPSBIOSNTHSS"/>
</dbReference>
<dbReference type="SUPFAM" id="SSF52374">
    <property type="entry name" value="Nucleotidylyl transferase"/>
    <property type="match status" value="1"/>
</dbReference>
<proteinExistence type="inferred from homology"/>
<feature type="chain" id="PRO_1000118071" description="Phosphopantetheine adenylyltransferase">
    <location>
        <begin position="1"/>
        <end position="164"/>
    </location>
</feature>
<feature type="binding site" evidence="1">
    <location>
        <begin position="9"/>
        <end position="10"/>
    </location>
    <ligand>
        <name>ATP</name>
        <dbReference type="ChEBI" id="CHEBI:30616"/>
    </ligand>
</feature>
<feature type="binding site" evidence="1">
    <location>
        <position position="9"/>
    </location>
    <ligand>
        <name>substrate</name>
    </ligand>
</feature>
<feature type="binding site" evidence="1">
    <location>
        <position position="17"/>
    </location>
    <ligand>
        <name>ATP</name>
        <dbReference type="ChEBI" id="CHEBI:30616"/>
    </ligand>
</feature>
<feature type="binding site" evidence="1">
    <location>
        <position position="41"/>
    </location>
    <ligand>
        <name>substrate</name>
    </ligand>
</feature>
<feature type="binding site" evidence="1">
    <location>
        <position position="76"/>
    </location>
    <ligand>
        <name>substrate</name>
    </ligand>
</feature>
<feature type="binding site" evidence="1">
    <location>
        <position position="90"/>
    </location>
    <ligand>
        <name>substrate</name>
    </ligand>
</feature>
<feature type="binding site" evidence="1">
    <location>
        <begin position="91"/>
        <end position="93"/>
    </location>
    <ligand>
        <name>ATP</name>
        <dbReference type="ChEBI" id="CHEBI:30616"/>
    </ligand>
</feature>
<feature type="binding site" evidence="1">
    <location>
        <position position="101"/>
    </location>
    <ligand>
        <name>ATP</name>
        <dbReference type="ChEBI" id="CHEBI:30616"/>
    </ligand>
</feature>
<feature type="binding site" evidence="1">
    <location>
        <begin position="126"/>
        <end position="132"/>
    </location>
    <ligand>
        <name>ATP</name>
        <dbReference type="ChEBI" id="CHEBI:30616"/>
    </ligand>
</feature>
<feature type="site" description="Transition state stabilizer" evidence="1">
    <location>
        <position position="17"/>
    </location>
</feature>
<evidence type="ECO:0000255" key="1">
    <source>
        <dbReference type="HAMAP-Rule" id="MF_00151"/>
    </source>
</evidence>
<protein>
    <recommendedName>
        <fullName evidence="1">Phosphopantetheine adenylyltransferase</fullName>
        <ecNumber evidence="1">2.7.7.3</ecNumber>
    </recommendedName>
    <alternativeName>
        <fullName evidence="1">Dephospho-CoA pyrophosphorylase</fullName>
    </alternativeName>
    <alternativeName>
        <fullName evidence="1">Pantetheine-phosphate adenylyltransferase</fullName>
        <shortName evidence="1">PPAT</shortName>
    </alternativeName>
</protein>
<reference key="1">
    <citation type="submission" date="2008-08" db="EMBL/GenBank/DDBJ databases">
        <title>The complete genome sequence of Coprothermobacter proteolyticus strain ATCC 5245 / DSM 5265 / BT.</title>
        <authorList>
            <person name="Dodson R.J."/>
            <person name="Durkin A.S."/>
            <person name="Wu M."/>
            <person name="Eisen J."/>
            <person name="Sutton G."/>
        </authorList>
    </citation>
    <scope>NUCLEOTIDE SEQUENCE [LARGE SCALE GENOMIC DNA]</scope>
    <source>
        <strain>ATCC 35245 / DSM 5265 / OCM 4 / BT</strain>
    </source>
</reference>